<reference key="1">
    <citation type="journal article" date="2004" name="Nature">
        <title>Genome evolution in yeasts.</title>
        <authorList>
            <person name="Dujon B."/>
            <person name="Sherman D."/>
            <person name="Fischer G."/>
            <person name="Durrens P."/>
            <person name="Casaregola S."/>
            <person name="Lafontaine I."/>
            <person name="de Montigny J."/>
            <person name="Marck C."/>
            <person name="Neuveglise C."/>
            <person name="Talla E."/>
            <person name="Goffard N."/>
            <person name="Frangeul L."/>
            <person name="Aigle M."/>
            <person name="Anthouard V."/>
            <person name="Babour A."/>
            <person name="Barbe V."/>
            <person name="Barnay S."/>
            <person name="Blanchin S."/>
            <person name="Beckerich J.-M."/>
            <person name="Beyne E."/>
            <person name="Bleykasten C."/>
            <person name="Boisrame A."/>
            <person name="Boyer J."/>
            <person name="Cattolico L."/>
            <person name="Confanioleri F."/>
            <person name="de Daruvar A."/>
            <person name="Despons L."/>
            <person name="Fabre E."/>
            <person name="Fairhead C."/>
            <person name="Ferry-Dumazet H."/>
            <person name="Groppi A."/>
            <person name="Hantraye F."/>
            <person name="Hennequin C."/>
            <person name="Jauniaux N."/>
            <person name="Joyet P."/>
            <person name="Kachouri R."/>
            <person name="Kerrest A."/>
            <person name="Koszul R."/>
            <person name="Lemaire M."/>
            <person name="Lesur I."/>
            <person name="Ma L."/>
            <person name="Muller H."/>
            <person name="Nicaud J.-M."/>
            <person name="Nikolski M."/>
            <person name="Oztas S."/>
            <person name="Ozier-Kalogeropoulos O."/>
            <person name="Pellenz S."/>
            <person name="Potier S."/>
            <person name="Richard G.-F."/>
            <person name="Straub M.-L."/>
            <person name="Suleau A."/>
            <person name="Swennen D."/>
            <person name="Tekaia F."/>
            <person name="Wesolowski-Louvel M."/>
            <person name="Westhof E."/>
            <person name="Wirth B."/>
            <person name="Zeniou-Meyer M."/>
            <person name="Zivanovic Y."/>
            <person name="Bolotin-Fukuhara M."/>
            <person name="Thierry A."/>
            <person name="Bouchier C."/>
            <person name="Caudron B."/>
            <person name="Scarpelli C."/>
            <person name="Gaillardin C."/>
            <person name="Weissenbach J."/>
            <person name="Wincker P."/>
            <person name="Souciet J.-L."/>
        </authorList>
    </citation>
    <scope>NUCLEOTIDE SEQUENCE [LARGE SCALE GENOMIC DNA]</scope>
    <source>
        <strain>ATCC 2001 / BCRC 20586 / JCM 3761 / NBRC 0622 / NRRL Y-65 / CBS 138</strain>
    </source>
</reference>
<evidence type="ECO:0000250" key="1">
    <source>
        <dbReference type="UniProtKB" id="P25808"/>
    </source>
</evidence>
<evidence type="ECO:0000255" key="2">
    <source>
        <dbReference type="PROSITE-ProRule" id="PRU00541"/>
    </source>
</evidence>
<evidence type="ECO:0000255" key="3">
    <source>
        <dbReference type="PROSITE-ProRule" id="PRU00542"/>
    </source>
</evidence>
<evidence type="ECO:0000305" key="4"/>
<comment type="function">
    <text evidence="1">ATP-binding RNA helicase involved in the biogenesis of 60S ribosomal subunits. Binds 90S pre-ribosomal particles and dissociates from pre-60S ribosomal particles after processing of 27SB pre-rRNA. Required for the normal formation of 18S rRNA through the processing of pre-rRNAs at sites A0, A1 and A2, and the normal formation of 25S and 5.8S rRNAs through the processing of pre-rRNAs at sites C1 and C2.</text>
</comment>
<comment type="catalytic activity">
    <reaction evidence="1">
        <text>ATP + H2O = ADP + phosphate + H(+)</text>
        <dbReference type="Rhea" id="RHEA:13065"/>
        <dbReference type="ChEBI" id="CHEBI:15377"/>
        <dbReference type="ChEBI" id="CHEBI:15378"/>
        <dbReference type="ChEBI" id="CHEBI:30616"/>
        <dbReference type="ChEBI" id="CHEBI:43474"/>
        <dbReference type="ChEBI" id="CHEBI:456216"/>
        <dbReference type="EC" id="3.6.4.13"/>
    </reaction>
</comment>
<comment type="subunit">
    <text evidence="1">Component of pre-60S ribosomal complexes.</text>
</comment>
<comment type="subcellular location">
    <subcellularLocation>
        <location evidence="1">Nucleus</location>
        <location evidence="1">Nucleolus</location>
    </subcellularLocation>
</comment>
<comment type="domain">
    <text>The Q motif is unique to and characteristic of the DEAD box family of RNA helicases and controls ATP binding and hydrolysis.</text>
</comment>
<comment type="similarity">
    <text evidence="4">Belongs to the DEAD box helicase family. DDX55/SPB4 subfamily.</text>
</comment>
<organism>
    <name type="scientific">Candida glabrata (strain ATCC 2001 / BCRC 20586 / JCM 3761 / NBRC 0622 / NRRL Y-65 / CBS 138)</name>
    <name type="common">Yeast</name>
    <name type="synonym">Nakaseomyces glabratus</name>
    <dbReference type="NCBI Taxonomy" id="284593"/>
    <lineage>
        <taxon>Eukaryota</taxon>
        <taxon>Fungi</taxon>
        <taxon>Dikarya</taxon>
        <taxon>Ascomycota</taxon>
        <taxon>Saccharomycotina</taxon>
        <taxon>Saccharomycetes</taxon>
        <taxon>Saccharomycetales</taxon>
        <taxon>Saccharomycetaceae</taxon>
        <taxon>Nakaseomyces</taxon>
    </lineage>
</organism>
<protein>
    <recommendedName>
        <fullName evidence="4">ATP-dependent rRNA helicase SPB4</fullName>
        <ecNumber evidence="1">3.6.4.13</ecNumber>
    </recommendedName>
</protein>
<sequence length="617" mass="70790">MGKSLEWADLDYELQPWIKKAINVSGFDSMTPVQASTIPMFAKNKDVVVESVTGSGKTIAFVIPILEKIISEGINNSKFKKGHFYSLILAPTRELSMQIQNVVSSFLEHYPEDQYPIRSQLVVGTNEKSVRDDVNTLLDERPQILIGTPGRVLDFLQSPSVKTSSCGMVVLDEADRLLDVSFFKDVEKILNVLPKQRRTGLFSATISSAGTLIFKTGLRNPVKITVNSQGKNAPTTLNLFYSVMKPEEKLQNLIHIMNNIRFKKCIVYFSTCVSVTFFYQYLKYLQQTDKTLREDLQVISIHGKLTTQSRRKALSTFTESLSDCILLTTDVAARGIDIPDVDLVLQIDPPTDADIFLHRCGRTGRANKIGRAIVFLNEGREEDYIPFMEVKNVDIEETDINKNKISNDNNDEFYQRFTKWLLSDRANYDLSVKSYVAFIRYYSKHSATSIFRLQSLDYVSLGKMYGLFRLPRMPEITKYLQDKEKSGETVVGYYGEGWLMNPPPIDMDKYAYQDKKREKARIEELKNLAQINDKKKLKAELKKKNMAWSSKTMTKEERQERRKKLDLKRKAIELEIAAEAERDESDTEITQDWKDEILQKKKKKKVGSEMQGSFDDL</sequence>
<gene>
    <name evidence="1" type="primary">SPB4</name>
    <name type="ordered locus">CAGL0L08976g</name>
</gene>
<keyword id="KW-0067">ATP-binding</keyword>
<keyword id="KW-0175">Coiled coil</keyword>
<keyword id="KW-0347">Helicase</keyword>
<keyword id="KW-0378">Hydrolase</keyword>
<keyword id="KW-0547">Nucleotide-binding</keyword>
<keyword id="KW-0539">Nucleus</keyword>
<keyword id="KW-1185">Reference proteome</keyword>
<keyword id="KW-0690">Ribosome biogenesis</keyword>
<keyword id="KW-0694">RNA-binding</keyword>
<keyword id="KW-0698">rRNA processing</keyword>
<proteinExistence type="inferred from homology"/>
<name>SPB4_CANGA</name>
<dbReference type="EC" id="3.6.4.13" evidence="1"/>
<dbReference type="EMBL" id="CR380958">
    <property type="protein sequence ID" value="CAG62136.1"/>
    <property type="molecule type" value="Genomic_DNA"/>
</dbReference>
<dbReference type="RefSeq" id="XP_449166.1">
    <property type="nucleotide sequence ID" value="XM_449166.1"/>
</dbReference>
<dbReference type="SMR" id="Q6FKS8"/>
<dbReference type="FunCoup" id="Q6FKS8">
    <property type="interactions" value="1286"/>
</dbReference>
<dbReference type="STRING" id="284593.Q6FKS8"/>
<dbReference type="EnsemblFungi" id="CAGL0L08976g-T">
    <property type="protein sequence ID" value="CAGL0L08976g-T-p1"/>
    <property type="gene ID" value="CAGL0L08976g"/>
</dbReference>
<dbReference type="KEGG" id="cgr:2891097"/>
<dbReference type="CGD" id="CAL0135944">
    <property type="gene designation" value="CAGL0L08976g"/>
</dbReference>
<dbReference type="VEuPathDB" id="FungiDB:CAGL0L08976g"/>
<dbReference type="eggNOG" id="KOG0345">
    <property type="taxonomic scope" value="Eukaryota"/>
</dbReference>
<dbReference type="HOGENOM" id="CLU_003041_26_4_1"/>
<dbReference type="InParanoid" id="Q6FKS8"/>
<dbReference type="OMA" id="AYKEHEC"/>
<dbReference type="Proteomes" id="UP000002428">
    <property type="component" value="Chromosome L"/>
</dbReference>
<dbReference type="GO" id="GO:0030686">
    <property type="term" value="C:90S preribosome"/>
    <property type="evidence" value="ECO:0007669"/>
    <property type="project" value="EnsemblFungi"/>
</dbReference>
<dbReference type="GO" id="GO:0005730">
    <property type="term" value="C:nucleolus"/>
    <property type="evidence" value="ECO:0007669"/>
    <property type="project" value="UniProtKB-SubCell"/>
</dbReference>
<dbReference type="GO" id="GO:0005654">
    <property type="term" value="C:nucleoplasm"/>
    <property type="evidence" value="ECO:0007669"/>
    <property type="project" value="EnsemblFungi"/>
</dbReference>
<dbReference type="GO" id="GO:0030687">
    <property type="term" value="C:preribosome, large subunit precursor"/>
    <property type="evidence" value="ECO:0007669"/>
    <property type="project" value="EnsemblFungi"/>
</dbReference>
<dbReference type="GO" id="GO:0005524">
    <property type="term" value="F:ATP binding"/>
    <property type="evidence" value="ECO:0007669"/>
    <property type="project" value="UniProtKB-KW"/>
</dbReference>
<dbReference type="GO" id="GO:0016887">
    <property type="term" value="F:ATP hydrolysis activity"/>
    <property type="evidence" value="ECO:0007669"/>
    <property type="project" value="RHEA"/>
</dbReference>
<dbReference type="GO" id="GO:0003723">
    <property type="term" value="F:RNA binding"/>
    <property type="evidence" value="ECO:0007669"/>
    <property type="project" value="UniProtKB-KW"/>
</dbReference>
<dbReference type="GO" id="GO:0003724">
    <property type="term" value="F:RNA helicase activity"/>
    <property type="evidence" value="ECO:0007669"/>
    <property type="project" value="UniProtKB-EC"/>
</dbReference>
<dbReference type="GO" id="GO:1902626">
    <property type="term" value="P:assembly of large subunit precursor of preribosome"/>
    <property type="evidence" value="ECO:0007669"/>
    <property type="project" value="EnsemblFungi"/>
</dbReference>
<dbReference type="GO" id="GO:0000470">
    <property type="term" value="P:maturation of LSU-rRNA"/>
    <property type="evidence" value="ECO:0007669"/>
    <property type="project" value="EnsemblFungi"/>
</dbReference>
<dbReference type="CDD" id="cd17960">
    <property type="entry name" value="DEADc_DDX55"/>
    <property type="match status" value="1"/>
</dbReference>
<dbReference type="CDD" id="cd18787">
    <property type="entry name" value="SF2_C_DEAD"/>
    <property type="match status" value="1"/>
</dbReference>
<dbReference type="Gene3D" id="3.40.50.300">
    <property type="entry name" value="P-loop containing nucleotide triphosphate hydrolases"/>
    <property type="match status" value="2"/>
</dbReference>
<dbReference type="InterPro" id="IPR056330">
    <property type="entry name" value="CTT_SPB4"/>
</dbReference>
<dbReference type="InterPro" id="IPR011545">
    <property type="entry name" value="DEAD/DEAH_box_helicase_dom"/>
</dbReference>
<dbReference type="InterPro" id="IPR014001">
    <property type="entry name" value="Helicase_ATP-bd"/>
</dbReference>
<dbReference type="InterPro" id="IPR001650">
    <property type="entry name" value="Helicase_C-like"/>
</dbReference>
<dbReference type="InterPro" id="IPR027417">
    <property type="entry name" value="P-loop_NTPase"/>
</dbReference>
<dbReference type="InterPro" id="IPR000629">
    <property type="entry name" value="RNA-helicase_DEAD-box_CS"/>
</dbReference>
<dbReference type="InterPro" id="IPR014014">
    <property type="entry name" value="RNA_helicase_DEAD_Q_motif"/>
</dbReference>
<dbReference type="InterPro" id="IPR025313">
    <property type="entry name" value="SPB4-like_CTE"/>
</dbReference>
<dbReference type="PANTHER" id="PTHR24031">
    <property type="entry name" value="RNA HELICASE"/>
    <property type="match status" value="1"/>
</dbReference>
<dbReference type="Pfam" id="PF13959">
    <property type="entry name" value="CTE_SPB4"/>
    <property type="match status" value="1"/>
</dbReference>
<dbReference type="Pfam" id="PF23681">
    <property type="entry name" value="CTT_SPB4"/>
    <property type="match status" value="1"/>
</dbReference>
<dbReference type="Pfam" id="PF00270">
    <property type="entry name" value="DEAD"/>
    <property type="match status" value="1"/>
</dbReference>
<dbReference type="Pfam" id="PF00271">
    <property type="entry name" value="Helicase_C"/>
    <property type="match status" value="1"/>
</dbReference>
<dbReference type="SMART" id="SM00487">
    <property type="entry name" value="DEXDc"/>
    <property type="match status" value="1"/>
</dbReference>
<dbReference type="SMART" id="SM01178">
    <property type="entry name" value="DUF4217"/>
    <property type="match status" value="1"/>
</dbReference>
<dbReference type="SMART" id="SM00490">
    <property type="entry name" value="HELICc"/>
    <property type="match status" value="1"/>
</dbReference>
<dbReference type="SUPFAM" id="SSF52540">
    <property type="entry name" value="P-loop containing nucleoside triphosphate hydrolases"/>
    <property type="match status" value="1"/>
</dbReference>
<dbReference type="PROSITE" id="PS00039">
    <property type="entry name" value="DEAD_ATP_HELICASE"/>
    <property type="match status" value="1"/>
</dbReference>
<dbReference type="PROSITE" id="PS51192">
    <property type="entry name" value="HELICASE_ATP_BIND_1"/>
    <property type="match status" value="1"/>
</dbReference>
<dbReference type="PROSITE" id="PS51194">
    <property type="entry name" value="HELICASE_CTER"/>
    <property type="match status" value="1"/>
</dbReference>
<dbReference type="PROSITE" id="PS51195">
    <property type="entry name" value="Q_MOTIF"/>
    <property type="match status" value="1"/>
</dbReference>
<accession>Q6FKS8</accession>
<feature type="chain" id="PRO_0000232325" description="ATP-dependent rRNA helicase SPB4">
    <location>
        <begin position="1"/>
        <end position="617"/>
    </location>
</feature>
<feature type="domain" description="Helicase ATP-binding" evidence="2">
    <location>
        <begin position="38"/>
        <end position="224"/>
    </location>
</feature>
<feature type="domain" description="Helicase C-terminal" evidence="3">
    <location>
        <begin position="252"/>
        <end position="406"/>
    </location>
</feature>
<feature type="short sequence motif" description="Q motif" evidence="4">
    <location>
        <begin position="7"/>
        <end position="35"/>
    </location>
</feature>
<feature type="short sequence motif" description="DEAD box" evidence="4">
    <location>
        <begin position="172"/>
        <end position="175"/>
    </location>
</feature>
<feature type="binding site" evidence="2">
    <location>
        <begin position="51"/>
        <end position="58"/>
    </location>
    <ligand>
        <name>ATP</name>
        <dbReference type="ChEBI" id="CHEBI:30616"/>
    </ligand>
</feature>